<accession>O33517</accession>
<accession>D5AU88</accession>
<keyword id="KW-0997">Cell inner membrane</keyword>
<keyword id="KW-1003">Cell membrane</keyword>
<keyword id="KW-0472">Membrane</keyword>
<keyword id="KW-0653">Protein transport</keyword>
<keyword id="KW-1185">Reference proteome</keyword>
<keyword id="KW-0811">Translocation</keyword>
<keyword id="KW-0812">Transmembrane</keyword>
<keyword id="KW-1133">Transmembrane helix</keyword>
<keyword id="KW-0813">Transport</keyword>
<reference key="1">
    <citation type="journal article" date="1997" name="J. Mol. Biol.">
        <title>Molecular and immunological analysis of an ABC transporter complex required for cytochrome c biogenesis.</title>
        <authorList>
            <person name="Goldman B.S."/>
            <person name="Beckman D.L."/>
            <person name="Bali A."/>
            <person name="Monika E.M."/>
            <person name="Gabbert K.K."/>
            <person name="Kranz R.G."/>
        </authorList>
    </citation>
    <scope>NUCLEOTIDE SEQUENCE [GENOMIC DNA]</scope>
    <source>
        <strain>ATCC BAA-309 / NBRC 16581 / SB1003</strain>
    </source>
</reference>
<reference key="2">
    <citation type="journal article" date="2010" name="J. Bacteriol.">
        <title>Complete genome sequence of the photosynthetic purple nonsulfur bacterium Rhodobacter capsulatus SB 1003.</title>
        <authorList>
            <person name="Strnad H."/>
            <person name="Lapidus A."/>
            <person name="Paces J."/>
            <person name="Ulbrich P."/>
            <person name="Vlcek C."/>
            <person name="Paces V."/>
            <person name="Haselkorn R."/>
        </authorList>
    </citation>
    <scope>NUCLEOTIDE SEQUENCE [LARGE SCALE GENOMIC DNA]</scope>
    <source>
        <strain>ATCC BAA-309 / NBRC 16581 / SB1003</strain>
    </source>
</reference>
<sequence length="554" mass="58943">MLQISLWKRLVILGLCLAALITAAPNMFYARVEGHNDAVSAFEKTGAMTETQEAAKAAWPDWAPSALVNLGLDLRGGAHLLAEVHLGEVYKARMDALWPEVRKVLAAERATIGAIRRVPSPEGELRIQIGERAQIARAVEVARTLASPVVSLTGVGQTDYEVTGEGDTVVFRLSEAEKKATDDRTMQQSLEIVRRRVDAAGTREPTIMREGTDRILIEVPGIGSAQELKDLIGTTAKLTFHPVLSTTSNPNAPVASGNELLPDAERQGLYHLLDEVPVVTGDDLTDARPTTDDNGAPAVSFRFNVSGARAFGDYTAGHIGEPFAIVLDGKVISAPTIQAHIAGGSGIITGRFSIEEATDLALLLRAGALPAGMTFLEERTIGPELGADSVKAGMVASVIGFVAVVAYMIASYGLFGFFSSVALFINIAFIFAVMGAIGGTMTLPGIAGIVLTIGTSVDANVLIYERMREEIRSGKSPVRAIELGFDKAMSAIIDANVTSFLSSAILFVLGAGPVRGFAVTTMIGIAASIFTAIWVVRLMIVIWYGWRRPKTIVI</sequence>
<feature type="chain" id="PRO_0000095967" description="Protein translocase subunit SecD">
    <location>
        <begin position="1"/>
        <end position="554"/>
    </location>
</feature>
<feature type="transmembrane region" description="Helical" evidence="1">
    <location>
        <begin position="10"/>
        <end position="30"/>
    </location>
</feature>
<feature type="transmembrane region" description="Helical" evidence="1">
    <location>
        <begin position="392"/>
        <end position="412"/>
    </location>
</feature>
<feature type="transmembrane region" description="Helical" evidence="1">
    <location>
        <begin position="414"/>
        <end position="434"/>
    </location>
</feature>
<feature type="transmembrane region" description="Helical" evidence="1">
    <location>
        <begin position="435"/>
        <end position="455"/>
    </location>
</feature>
<feature type="transmembrane region" description="Helical" evidence="1">
    <location>
        <begin position="491"/>
        <end position="511"/>
    </location>
</feature>
<feature type="transmembrane region" description="Helical" evidence="1">
    <location>
        <begin position="516"/>
        <end position="536"/>
    </location>
</feature>
<protein>
    <recommendedName>
        <fullName evidence="1">Protein translocase subunit SecD</fullName>
    </recommendedName>
</protein>
<comment type="function">
    <text evidence="1">Part of the Sec protein translocase complex. Interacts with the SecYEG preprotein conducting channel. SecDF uses the proton motive force (PMF) to complete protein translocation after the ATP-dependent function of SecA.</text>
</comment>
<comment type="subunit">
    <text evidence="1">Forms a complex with SecF. Part of the essential Sec protein translocation apparatus which comprises SecA, SecYEG and auxiliary proteins SecDF-YajC and YidC.</text>
</comment>
<comment type="subcellular location">
    <subcellularLocation>
        <location evidence="1">Cell inner membrane</location>
        <topology evidence="1">Multi-pass membrane protein</topology>
    </subcellularLocation>
</comment>
<comment type="similarity">
    <text evidence="1">Belongs to the SecD/SecF family. SecD subfamily.</text>
</comment>
<name>SECD_RHOCB</name>
<gene>
    <name evidence="1" type="primary">secD</name>
    <name type="ordered locus">RCAP_rcc01782</name>
</gene>
<dbReference type="EMBL" id="U69979">
    <property type="protein sequence ID" value="AAB62801.1"/>
    <property type="molecule type" value="Genomic_DNA"/>
</dbReference>
<dbReference type="EMBL" id="CP001312">
    <property type="protein sequence ID" value="ADE85527.1"/>
    <property type="molecule type" value="Genomic_DNA"/>
</dbReference>
<dbReference type="RefSeq" id="WP_013067506.1">
    <property type="nucleotide sequence ID" value="NC_014034.1"/>
</dbReference>
<dbReference type="SMR" id="O33517"/>
<dbReference type="STRING" id="272942.RCAP_rcc01782"/>
<dbReference type="GeneID" id="31490657"/>
<dbReference type="KEGG" id="rcp:RCAP_rcc01782"/>
<dbReference type="eggNOG" id="COG0342">
    <property type="taxonomic scope" value="Bacteria"/>
</dbReference>
<dbReference type="HOGENOM" id="CLU_007894_4_3_5"/>
<dbReference type="OrthoDB" id="9805019at2"/>
<dbReference type="Proteomes" id="UP000002361">
    <property type="component" value="Chromosome"/>
</dbReference>
<dbReference type="GO" id="GO:0005886">
    <property type="term" value="C:plasma membrane"/>
    <property type="evidence" value="ECO:0007669"/>
    <property type="project" value="UniProtKB-SubCell"/>
</dbReference>
<dbReference type="GO" id="GO:0015450">
    <property type="term" value="F:protein-transporting ATPase activity"/>
    <property type="evidence" value="ECO:0007669"/>
    <property type="project" value="InterPro"/>
</dbReference>
<dbReference type="GO" id="GO:0065002">
    <property type="term" value="P:intracellular protein transmembrane transport"/>
    <property type="evidence" value="ECO:0007669"/>
    <property type="project" value="UniProtKB-UniRule"/>
</dbReference>
<dbReference type="GO" id="GO:0006605">
    <property type="term" value="P:protein targeting"/>
    <property type="evidence" value="ECO:0007669"/>
    <property type="project" value="UniProtKB-UniRule"/>
</dbReference>
<dbReference type="GO" id="GO:0043952">
    <property type="term" value="P:protein transport by the Sec complex"/>
    <property type="evidence" value="ECO:0007669"/>
    <property type="project" value="UniProtKB-UniRule"/>
</dbReference>
<dbReference type="FunFam" id="1.20.1640.10:FF:000004">
    <property type="entry name" value="Protein translocase subunit SecD"/>
    <property type="match status" value="1"/>
</dbReference>
<dbReference type="Gene3D" id="3.30.1360.200">
    <property type="match status" value="1"/>
</dbReference>
<dbReference type="Gene3D" id="3.30.70.3400">
    <property type="match status" value="1"/>
</dbReference>
<dbReference type="Gene3D" id="1.20.1640.10">
    <property type="entry name" value="Multidrug efflux transporter AcrB transmembrane domain"/>
    <property type="match status" value="1"/>
</dbReference>
<dbReference type="HAMAP" id="MF_01463_B">
    <property type="entry name" value="SecD_B"/>
    <property type="match status" value="1"/>
</dbReference>
<dbReference type="InterPro" id="IPR005791">
    <property type="entry name" value="SecD"/>
</dbReference>
<dbReference type="InterPro" id="IPR022813">
    <property type="entry name" value="SecD/SecF_arch_bac"/>
</dbReference>
<dbReference type="InterPro" id="IPR048631">
    <property type="entry name" value="SecD_1st"/>
</dbReference>
<dbReference type="InterPro" id="IPR048634">
    <property type="entry name" value="SecD_SecF_C"/>
</dbReference>
<dbReference type="InterPro" id="IPR055344">
    <property type="entry name" value="SecD_SecF_C_bact"/>
</dbReference>
<dbReference type="InterPro" id="IPR054384">
    <property type="entry name" value="SecDF_P1_head"/>
</dbReference>
<dbReference type="NCBIfam" id="TIGR00916">
    <property type="entry name" value="2A0604s01"/>
    <property type="match status" value="1"/>
</dbReference>
<dbReference type="NCBIfam" id="TIGR01129">
    <property type="entry name" value="secD"/>
    <property type="match status" value="1"/>
</dbReference>
<dbReference type="PANTHER" id="PTHR30081:SF1">
    <property type="entry name" value="PROTEIN TRANSLOCASE SUBUNIT SECD"/>
    <property type="match status" value="1"/>
</dbReference>
<dbReference type="PANTHER" id="PTHR30081">
    <property type="entry name" value="PROTEIN-EXPORT MEMBRANE PROTEIN SEC"/>
    <property type="match status" value="1"/>
</dbReference>
<dbReference type="Pfam" id="PF21760">
    <property type="entry name" value="SecD_1st"/>
    <property type="match status" value="1"/>
</dbReference>
<dbReference type="Pfam" id="PF02355">
    <property type="entry name" value="SecD_SecF_C"/>
    <property type="match status" value="1"/>
</dbReference>
<dbReference type="Pfam" id="PF22599">
    <property type="entry name" value="SecDF_P1_head"/>
    <property type="match status" value="1"/>
</dbReference>
<dbReference type="SUPFAM" id="SSF82866">
    <property type="entry name" value="Multidrug efflux transporter AcrB transmembrane domain"/>
    <property type="match status" value="1"/>
</dbReference>
<proteinExistence type="inferred from homology"/>
<evidence type="ECO:0000255" key="1">
    <source>
        <dbReference type="HAMAP-Rule" id="MF_01463"/>
    </source>
</evidence>
<organism>
    <name type="scientific">Rhodobacter capsulatus (strain ATCC BAA-309 / NBRC 16581 / SB1003)</name>
    <dbReference type="NCBI Taxonomy" id="272942"/>
    <lineage>
        <taxon>Bacteria</taxon>
        <taxon>Pseudomonadati</taxon>
        <taxon>Pseudomonadota</taxon>
        <taxon>Alphaproteobacteria</taxon>
        <taxon>Rhodobacterales</taxon>
        <taxon>Rhodobacter group</taxon>
        <taxon>Rhodobacter</taxon>
    </lineage>
</organism>